<keyword id="KW-0997">Cell inner membrane</keyword>
<keyword id="KW-1003">Cell membrane</keyword>
<keyword id="KW-0868">Chloride</keyword>
<keyword id="KW-0869">Chloride channel</keyword>
<keyword id="KW-0407">Ion channel</keyword>
<keyword id="KW-0406">Ion transport</keyword>
<keyword id="KW-0472">Membrane</keyword>
<keyword id="KW-1185">Reference proteome</keyword>
<keyword id="KW-0812">Transmembrane</keyword>
<keyword id="KW-1133">Transmembrane helix</keyword>
<keyword id="KW-0813">Transport</keyword>
<keyword id="KW-0851">Voltage-gated channel</keyword>
<feature type="chain" id="PRO_0000094486" description="Voltage-gated ClC-type chloride channel ClcB">
    <location>
        <begin position="1"/>
        <end position="418"/>
    </location>
</feature>
<feature type="topological domain" description="Cytoplasmic" evidence="2">
    <location>
        <begin position="1"/>
        <end position="4"/>
    </location>
</feature>
<feature type="transmembrane region" description="Helical" evidence="2">
    <location>
        <begin position="5"/>
        <end position="25"/>
    </location>
</feature>
<feature type="topological domain" description="Periplasmic" evidence="2">
    <location>
        <begin position="26"/>
        <end position="53"/>
    </location>
</feature>
<feature type="transmembrane region" description="Helical" evidence="2">
    <location>
        <begin position="54"/>
        <end position="74"/>
    </location>
</feature>
<feature type="topological domain" description="Cytoplasmic" evidence="2">
    <location>
        <begin position="75"/>
        <end position="145"/>
    </location>
</feature>
<feature type="transmembrane region" description="Helical" evidence="2">
    <location>
        <begin position="146"/>
        <end position="166"/>
    </location>
</feature>
<feature type="topological domain" description="Periplasmic" evidence="2">
    <location>
        <begin position="167"/>
        <end position="177"/>
    </location>
</feature>
<feature type="transmembrane region" description="Helical" evidence="2">
    <location>
        <begin position="178"/>
        <end position="200"/>
    </location>
</feature>
<feature type="topological domain" description="Cytoplasmic" evidence="2">
    <location>
        <begin position="201"/>
        <end position="221"/>
    </location>
</feature>
<feature type="transmembrane region" description="Helical" evidence="2">
    <location>
        <begin position="222"/>
        <end position="242"/>
    </location>
</feature>
<feature type="topological domain" description="Periplasmic" evidence="2">
    <location>
        <begin position="243"/>
        <end position="257"/>
    </location>
</feature>
<feature type="transmembrane region" description="Helical" evidence="2">
    <location>
        <begin position="258"/>
        <end position="278"/>
    </location>
</feature>
<feature type="topological domain" description="Cytoplasmic" evidence="2">
    <location>
        <begin position="279"/>
        <end position="290"/>
    </location>
</feature>
<feature type="transmembrane region" description="Helical" evidence="2">
    <location>
        <begin position="291"/>
        <end position="311"/>
    </location>
</feature>
<feature type="topological domain" description="Periplasmic" evidence="2">
    <location>
        <begin position="312"/>
        <end position="315"/>
    </location>
</feature>
<feature type="transmembrane region" description="Helical" evidence="2">
    <location>
        <begin position="316"/>
        <end position="336"/>
    </location>
</feature>
<feature type="topological domain" description="Cytoplasmic" evidence="2">
    <location>
        <begin position="337"/>
        <end position="351"/>
    </location>
</feature>
<feature type="transmembrane region" description="Helical" evidence="2">
    <location>
        <begin position="352"/>
        <end position="372"/>
    </location>
</feature>
<feature type="topological domain" description="Periplasmic" evidence="2">
    <location>
        <begin position="373"/>
        <end position="379"/>
    </location>
</feature>
<feature type="transmembrane region" description="Helical" evidence="2">
    <location>
        <begin position="380"/>
        <end position="400"/>
    </location>
</feature>
<feature type="topological domain" description="Cytoplasmic" evidence="2">
    <location>
        <begin position="401"/>
        <end position="418"/>
    </location>
</feature>
<accession>Q8FHC1</accession>
<proteinExistence type="inferred from homology"/>
<reference key="1">
    <citation type="journal article" date="2002" name="Proc. Natl. Acad. Sci. U.S.A.">
        <title>Extensive mosaic structure revealed by the complete genome sequence of uropathogenic Escherichia coli.</title>
        <authorList>
            <person name="Welch R.A."/>
            <person name="Burland V."/>
            <person name="Plunkett G. III"/>
            <person name="Redford P."/>
            <person name="Roesch P."/>
            <person name="Rasko D."/>
            <person name="Buckles E.L."/>
            <person name="Liou S.-R."/>
            <person name="Boutin A."/>
            <person name="Hackett J."/>
            <person name="Stroud D."/>
            <person name="Mayhew G.F."/>
            <person name="Rose D.J."/>
            <person name="Zhou S."/>
            <person name="Schwartz D.C."/>
            <person name="Perna N.T."/>
            <person name="Mobley H.L.T."/>
            <person name="Donnenberg M.S."/>
            <person name="Blattner F.R."/>
        </authorList>
    </citation>
    <scope>NUCLEOTIDE SEQUENCE [LARGE SCALE GENOMIC DNA]</scope>
    <source>
        <strain>CFT073 / ATCC 700928 / UPEC</strain>
    </source>
</reference>
<protein>
    <recommendedName>
        <fullName>Voltage-gated ClC-type chloride channel ClcB</fullName>
    </recommendedName>
</protein>
<gene>
    <name type="primary">clcB</name>
    <name type="ordered locus">c1983</name>
</gene>
<dbReference type="EMBL" id="AE014075">
    <property type="protein sequence ID" value="AAN80443.1"/>
    <property type="status" value="ALT_INIT"/>
    <property type="molecule type" value="Genomic_DNA"/>
</dbReference>
<dbReference type="SMR" id="Q8FHC1"/>
<dbReference type="STRING" id="199310.c1983"/>
<dbReference type="TCDB" id="2.A.49.5.3">
    <property type="family name" value="the chloride carrier/channel (clc) family"/>
</dbReference>
<dbReference type="KEGG" id="ecc:c1983"/>
<dbReference type="eggNOG" id="COG0038">
    <property type="taxonomic scope" value="Bacteria"/>
</dbReference>
<dbReference type="HOGENOM" id="CLU_015263_5_2_6"/>
<dbReference type="Proteomes" id="UP000001410">
    <property type="component" value="Chromosome"/>
</dbReference>
<dbReference type="GO" id="GO:0034707">
    <property type="term" value="C:chloride channel complex"/>
    <property type="evidence" value="ECO:0007669"/>
    <property type="project" value="UniProtKB-KW"/>
</dbReference>
<dbReference type="GO" id="GO:0005886">
    <property type="term" value="C:plasma membrane"/>
    <property type="evidence" value="ECO:0007669"/>
    <property type="project" value="UniProtKB-SubCell"/>
</dbReference>
<dbReference type="GO" id="GO:0005247">
    <property type="term" value="F:voltage-gated chloride channel activity"/>
    <property type="evidence" value="ECO:0007669"/>
    <property type="project" value="UniProtKB-UniRule"/>
</dbReference>
<dbReference type="GO" id="GO:0010447">
    <property type="term" value="P:response to acidic pH"/>
    <property type="evidence" value="ECO:0007669"/>
    <property type="project" value="InterPro"/>
</dbReference>
<dbReference type="CDD" id="cd00400">
    <property type="entry name" value="Voltage_gated_ClC"/>
    <property type="match status" value="1"/>
</dbReference>
<dbReference type="FunFam" id="1.10.3080.10:FF:000010">
    <property type="entry name" value="Voltage-gated ClC-type chloride channel ClcB"/>
    <property type="match status" value="1"/>
</dbReference>
<dbReference type="Gene3D" id="1.10.3080.10">
    <property type="entry name" value="Clc chloride channel"/>
    <property type="match status" value="1"/>
</dbReference>
<dbReference type="HAMAP" id="MF_01203">
    <property type="entry name" value="CLC_ClcB"/>
    <property type="match status" value="1"/>
</dbReference>
<dbReference type="InterPro" id="IPR014743">
    <property type="entry name" value="Cl-channel_core"/>
</dbReference>
<dbReference type="InterPro" id="IPR023790">
    <property type="entry name" value="Cl-channel_volt-gated_ClcB"/>
</dbReference>
<dbReference type="InterPro" id="IPR001807">
    <property type="entry name" value="ClC"/>
</dbReference>
<dbReference type="InterPro" id="IPR050368">
    <property type="entry name" value="ClC-type_chloride_channel"/>
</dbReference>
<dbReference type="NCBIfam" id="NF002437">
    <property type="entry name" value="PRK01610.1"/>
    <property type="match status" value="1"/>
</dbReference>
<dbReference type="PANTHER" id="PTHR43427">
    <property type="entry name" value="CHLORIDE CHANNEL PROTEIN CLC-E"/>
    <property type="match status" value="1"/>
</dbReference>
<dbReference type="PANTHER" id="PTHR43427:SF6">
    <property type="entry name" value="CHLORIDE CHANNEL PROTEIN CLC-E"/>
    <property type="match status" value="1"/>
</dbReference>
<dbReference type="Pfam" id="PF00654">
    <property type="entry name" value="Voltage_CLC"/>
    <property type="match status" value="1"/>
</dbReference>
<dbReference type="PRINTS" id="PR00762">
    <property type="entry name" value="CLCHANNEL"/>
</dbReference>
<dbReference type="SUPFAM" id="SSF81340">
    <property type="entry name" value="Clc chloride channel"/>
    <property type="match status" value="1"/>
</dbReference>
<sequence length="418" mass="44139">MFRRLLIATIVGILAAFAVAGFRHAMLLLEWLFLNNDSGSLVNAATNLSPWRRLLTPALGGLAAGLLLMGWQKFTQQRPHAPTDYMEALQTDGQFDYAASLVKSLASLLVVTSGSAIGREGAMILLAALAASCFAQRFTPRQEWKLWIACGAAAGMAAAYRAPLAGSLFIAEVLFGTMMLASLGPVIISAVVALLISNLINHSDALLYSVQLSVTVQARDYALIISTGVLAGLCGPLLLTLMNACHRGFVSLKLAPPWQLALGGLIVGLLSLFTPAVWGNGYSTVQSFLTAPPLLMIIAGIFLCKLCAVLASSGSGAPGGVFTPTLFIGLAIGMLYGRSLGLWLPDGEEITLLLGLTGMATLLAATTHAPIMSTLMICEMTGEYQLLPGLLIACVIASVISRTLHRDSIYRQHTAKHS</sequence>
<name>CLCB_ECOL6</name>
<comment type="function">
    <text evidence="1">Probably acts as an electrical shunt for an outwardly-directed proton pump that is linked to amino acid decarboxylation, as part of the extreme acid resistance (XAR) response.</text>
</comment>
<comment type="subcellular location">
    <subcellularLocation>
        <location evidence="1">Cell inner membrane</location>
        <topology evidence="1">Multi-pass membrane protein</topology>
    </subcellularLocation>
</comment>
<comment type="similarity">
    <text evidence="3">Belongs to the chloride channel (TC 2.A.49) family. ClcB subfamily.</text>
</comment>
<comment type="sequence caution" evidence="3">
    <conflict type="erroneous initiation">
        <sequence resource="EMBL-CDS" id="AAN80443"/>
    </conflict>
</comment>
<evidence type="ECO:0000250" key="1"/>
<evidence type="ECO:0000255" key="2"/>
<evidence type="ECO:0000305" key="3"/>
<organism>
    <name type="scientific">Escherichia coli O6:H1 (strain CFT073 / ATCC 700928 / UPEC)</name>
    <dbReference type="NCBI Taxonomy" id="199310"/>
    <lineage>
        <taxon>Bacteria</taxon>
        <taxon>Pseudomonadati</taxon>
        <taxon>Pseudomonadota</taxon>
        <taxon>Gammaproteobacteria</taxon>
        <taxon>Enterobacterales</taxon>
        <taxon>Enterobacteriaceae</taxon>
        <taxon>Escherichia</taxon>
    </lineage>
</organism>